<sequence length="156" mass="17514">MTKMNVESFNLDHTKVVAPFIRLAGTMEGLNGDVIHKYDIRFKQPNKEHMDMPGLHSLEHLMAENIRNHSDKVVDLSPMGCQTGFYVSFINHDNYDDVLNIVEATLNDVLNATEVPACNEVQCGWAASHSLEGAKTIAQAFLDKRNEWHDVFGTGK</sequence>
<evidence type="ECO:0000255" key="1">
    <source>
        <dbReference type="HAMAP-Rule" id="MF_00091"/>
    </source>
</evidence>
<accession>Q6G7H6</accession>
<dbReference type="EC" id="4.4.1.21" evidence="1"/>
<dbReference type="EMBL" id="BX571857">
    <property type="protein sequence ID" value="CAG43845.1"/>
    <property type="molecule type" value="Genomic_DNA"/>
</dbReference>
<dbReference type="RefSeq" id="WP_000164421.1">
    <property type="nucleotide sequence ID" value="NC_002953.3"/>
</dbReference>
<dbReference type="SMR" id="Q6G7H6"/>
<dbReference type="KEGG" id="sas:SAS2037"/>
<dbReference type="HOGENOM" id="CLU_107531_2_0_9"/>
<dbReference type="GO" id="GO:0005506">
    <property type="term" value="F:iron ion binding"/>
    <property type="evidence" value="ECO:0007669"/>
    <property type="project" value="InterPro"/>
</dbReference>
<dbReference type="GO" id="GO:0043768">
    <property type="term" value="F:S-ribosylhomocysteine lyase activity"/>
    <property type="evidence" value="ECO:0007669"/>
    <property type="project" value="UniProtKB-UniRule"/>
</dbReference>
<dbReference type="GO" id="GO:0009372">
    <property type="term" value="P:quorum sensing"/>
    <property type="evidence" value="ECO:0007669"/>
    <property type="project" value="UniProtKB-UniRule"/>
</dbReference>
<dbReference type="Gene3D" id="3.30.1360.80">
    <property type="entry name" value="S-ribosylhomocysteinase (LuxS)"/>
    <property type="match status" value="1"/>
</dbReference>
<dbReference type="HAMAP" id="MF_00091">
    <property type="entry name" value="LuxS"/>
    <property type="match status" value="1"/>
</dbReference>
<dbReference type="InterPro" id="IPR037005">
    <property type="entry name" value="LuxS_sf"/>
</dbReference>
<dbReference type="InterPro" id="IPR011249">
    <property type="entry name" value="Metalloenz_LuxS/M16"/>
</dbReference>
<dbReference type="InterPro" id="IPR003815">
    <property type="entry name" value="S-ribosylhomocysteinase"/>
</dbReference>
<dbReference type="NCBIfam" id="NF002604">
    <property type="entry name" value="PRK02260.1-4"/>
    <property type="match status" value="1"/>
</dbReference>
<dbReference type="PANTHER" id="PTHR35799">
    <property type="entry name" value="S-RIBOSYLHOMOCYSTEINE LYASE"/>
    <property type="match status" value="1"/>
</dbReference>
<dbReference type="PANTHER" id="PTHR35799:SF1">
    <property type="entry name" value="S-RIBOSYLHOMOCYSTEINE LYASE"/>
    <property type="match status" value="1"/>
</dbReference>
<dbReference type="Pfam" id="PF02664">
    <property type="entry name" value="LuxS"/>
    <property type="match status" value="1"/>
</dbReference>
<dbReference type="PIRSF" id="PIRSF006160">
    <property type="entry name" value="AI2"/>
    <property type="match status" value="1"/>
</dbReference>
<dbReference type="PRINTS" id="PR01487">
    <property type="entry name" value="LUXSPROTEIN"/>
</dbReference>
<dbReference type="SUPFAM" id="SSF63411">
    <property type="entry name" value="LuxS/MPP-like metallohydrolase"/>
    <property type="match status" value="1"/>
</dbReference>
<reference key="1">
    <citation type="journal article" date="2004" name="Proc. Natl. Acad. Sci. U.S.A.">
        <title>Complete genomes of two clinical Staphylococcus aureus strains: evidence for the rapid evolution of virulence and drug resistance.</title>
        <authorList>
            <person name="Holden M.T.G."/>
            <person name="Feil E.J."/>
            <person name="Lindsay J.A."/>
            <person name="Peacock S.J."/>
            <person name="Day N.P.J."/>
            <person name="Enright M.C."/>
            <person name="Foster T.J."/>
            <person name="Moore C.E."/>
            <person name="Hurst L."/>
            <person name="Atkin R."/>
            <person name="Barron A."/>
            <person name="Bason N."/>
            <person name="Bentley S.D."/>
            <person name="Chillingworth C."/>
            <person name="Chillingworth T."/>
            <person name="Churcher C."/>
            <person name="Clark L."/>
            <person name="Corton C."/>
            <person name="Cronin A."/>
            <person name="Doggett J."/>
            <person name="Dowd L."/>
            <person name="Feltwell T."/>
            <person name="Hance Z."/>
            <person name="Harris B."/>
            <person name="Hauser H."/>
            <person name="Holroyd S."/>
            <person name="Jagels K."/>
            <person name="James K.D."/>
            <person name="Lennard N."/>
            <person name="Line A."/>
            <person name="Mayes R."/>
            <person name="Moule S."/>
            <person name="Mungall K."/>
            <person name="Ormond D."/>
            <person name="Quail M.A."/>
            <person name="Rabbinowitsch E."/>
            <person name="Rutherford K.M."/>
            <person name="Sanders M."/>
            <person name="Sharp S."/>
            <person name="Simmonds M."/>
            <person name="Stevens K."/>
            <person name="Whitehead S."/>
            <person name="Barrell B.G."/>
            <person name="Spratt B.G."/>
            <person name="Parkhill J."/>
        </authorList>
    </citation>
    <scope>NUCLEOTIDE SEQUENCE [LARGE SCALE GENOMIC DNA]</scope>
    <source>
        <strain>MSSA476</strain>
    </source>
</reference>
<gene>
    <name evidence="1" type="primary">luxS</name>
    <name type="ordered locus">SAS2037</name>
</gene>
<proteinExistence type="inferred from homology"/>
<organism>
    <name type="scientific">Staphylococcus aureus (strain MSSA476)</name>
    <dbReference type="NCBI Taxonomy" id="282459"/>
    <lineage>
        <taxon>Bacteria</taxon>
        <taxon>Bacillati</taxon>
        <taxon>Bacillota</taxon>
        <taxon>Bacilli</taxon>
        <taxon>Bacillales</taxon>
        <taxon>Staphylococcaceae</taxon>
        <taxon>Staphylococcus</taxon>
    </lineage>
</organism>
<keyword id="KW-0071">Autoinducer synthesis</keyword>
<keyword id="KW-0408">Iron</keyword>
<keyword id="KW-0456">Lyase</keyword>
<keyword id="KW-0479">Metal-binding</keyword>
<keyword id="KW-0673">Quorum sensing</keyword>
<protein>
    <recommendedName>
        <fullName evidence="1">S-ribosylhomocysteine lyase</fullName>
        <ecNumber evidence="1">4.4.1.21</ecNumber>
    </recommendedName>
    <alternativeName>
        <fullName evidence="1">AI-2 synthesis protein</fullName>
    </alternativeName>
    <alternativeName>
        <fullName evidence="1">Autoinducer-2 production protein LuxS</fullName>
    </alternativeName>
</protein>
<comment type="function">
    <text evidence="1">Involved in the synthesis of autoinducer 2 (AI-2) which is secreted by bacteria and is used to communicate both the cell density and the metabolic potential of the environment. The regulation of gene expression in response to changes in cell density is called quorum sensing. Catalyzes the transformation of S-ribosylhomocysteine (RHC) to homocysteine (HC) and 4,5-dihydroxy-2,3-pentadione (DPD).</text>
</comment>
<comment type="catalytic activity">
    <reaction evidence="1">
        <text>S-(5-deoxy-D-ribos-5-yl)-L-homocysteine = (S)-4,5-dihydroxypentane-2,3-dione + L-homocysteine</text>
        <dbReference type="Rhea" id="RHEA:17753"/>
        <dbReference type="ChEBI" id="CHEBI:29484"/>
        <dbReference type="ChEBI" id="CHEBI:58195"/>
        <dbReference type="ChEBI" id="CHEBI:58199"/>
        <dbReference type="EC" id="4.4.1.21"/>
    </reaction>
</comment>
<comment type="cofactor">
    <cofactor evidence="1">
        <name>Fe cation</name>
        <dbReference type="ChEBI" id="CHEBI:24875"/>
    </cofactor>
    <text evidence="1">Binds 1 Fe cation per subunit.</text>
</comment>
<comment type="subunit">
    <text evidence="1">Homodimer.</text>
</comment>
<comment type="similarity">
    <text evidence="1">Belongs to the LuxS family.</text>
</comment>
<feature type="chain" id="PRO_0000172257" description="S-ribosylhomocysteine lyase">
    <location>
        <begin position="1"/>
        <end position="156"/>
    </location>
</feature>
<feature type="binding site" evidence="1">
    <location>
        <position position="56"/>
    </location>
    <ligand>
        <name>Fe cation</name>
        <dbReference type="ChEBI" id="CHEBI:24875"/>
    </ligand>
</feature>
<feature type="binding site" evidence="1">
    <location>
        <position position="60"/>
    </location>
    <ligand>
        <name>Fe cation</name>
        <dbReference type="ChEBI" id="CHEBI:24875"/>
    </ligand>
</feature>
<feature type="binding site" evidence="1">
    <location>
        <position position="123"/>
    </location>
    <ligand>
        <name>Fe cation</name>
        <dbReference type="ChEBI" id="CHEBI:24875"/>
    </ligand>
</feature>
<name>LUXS_STAAS</name>